<proteinExistence type="evidence at transcript level"/>
<keyword id="KW-0025">Alternative splicing</keyword>
<keyword id="KW-0175">Coiled coil</keyword>
<keyword id="KW-0238">DNA-binding</keyword>
<keyword id="KW-0479">Metal-binding</keyword>
<keyword id="KW-0539">Nucleus</keyword>
<keyword id="KW-1185">Reference proteome</keyword>
<keyword id="KW-0677">Repeat</keyword>
<keyword id="KW-0804">Transcription</keyword>
<keyword id="KW-0805">Transcription regulation</keyword>
<keyword id="KW-0862">Zinc</keyword>
<keyword id="KW-0863">Zinc-finger</keyword>
<protein>
    <recommendedName>
        <fullName evidence="7">Protein indeterminate-domain 16</fullName>
        <shortName evidence="7">AtIDD16</shortName>
    </recommendedName>
</protein>
<accession>Q9FRH4</accession>
<accession>C0SUX3</accession>
<reference key="1">
    <citation type="journal article" date="2000" name="Nature">
        <title>Sequence and analysis of chromosome 1 of the plant Arabidopsis thaliana.</title>
        <authorList>
            <person name="Theologis A."/>
            <person name="Ecker J.R."/>
            <person name="Palm C.J."/>
            <person name="Federspiel N.A."/>
            <person name="Kaul S."/>
            <person name="White O."/>
            <person name="Alonso J."/>
            <person name="Altafi H."/>
            <person name="Araujo R."/>
            <person name="Bowman C.L."/>
            <person name="Brooks S.Y."/>
            <person name="Buehler E."/>
            <person name="Chan A."/>
            <person name="Chao Q."/>
            <person name="Chen H."/>
            <person name="Cheuk R.F."/>
            <person name="Chin C.W."/>
            <person name="Chung M.K."/>
            <person name="Conn L."/>
            <person name="Conway A.B."/>
            <person name="Conway A.R."/>
            <person name="Creasy T.H."/>
            <person name="Dewar K."/>
            <person name="Dunn P."/>
            <person name="Etgu P."/>
            <person name="Feldblyum T.V."/>
            <person name="Feng J.-D."/>
            <person name="Fong B."/>
            <person name="Fujii C.Y."/>
            <person name="Gill J.E."/>
            <person name="Goldsmith A.D."/>
            <person name="Haas B."/>
            <person name="Hansen N.F."/>
            <person name="Hughes B."/>
            <person name="Huizar L."/>
            <person name="Hunter J.L."/>
            <person name="Jenkins J."/>
            <person name="Johnson-Hopson C."/>
            <person name="Khan S."/>
            <person name="Khaykin E."/>
            <person name="Kim C.J."/>
            <person name="Koo H.L."/>
            <person name="Kremenetskaia I."/>
            <person name="Kurtz D.B."/>
            <person name="Kwan A."/>
            <person name="Lam B."/>
            <person name="Langin-Hooper S."/>
            <person name="Lee A."/>
            <person name="Lee J.M."/>
            <person name="Lenz C.A."/>
            <person name="Li J.H."/>
            <person name="Li Y.-P."/>
            <person name="Lin X."/>
            <person name="Liu S.X."/>
            <person name="Liu Z.A."/>
            <person name="Luros J.S."/>
            <person name="Maiti R."/>
            <person name="Marziali A."/>
            <person name="Militscher J."/>
            <person name="Miranda M."/>
            <person name="Nguyen M."/>
            <person name="Nierman W.C."/>
            <person name="Osborne B.I."/>
            <person name="Pai G."/>
            <person name="Peterson J."/>
            <person name="Pham P.K."/>
            <person name="Rizzo M."/>
            <person name="Rooney T."/>
            <person name="Rowley D."/>
            <person name="Sakano H."/>
            <person name="Salzberg S.L."/>
            <person name="Schwartz J.R."/>
            <person name="Shinn P."/>
            <person name="Southwick A.M."/>
            <person name="Sun H."/>
            <person name="Tallon L.J."/>
            <person name="Tambunga G."/>
            <person name="Toriumi M.J."/>
            <person name="Town C.D."/>
            <person name="Utterback T."/>
            <person name="Van Aken S."/>
            <person name="Vaysberg M."/>
            <person name="Vysotskaia V.S."/>
            <person name="Walker M."/>
            <person name="Wu D."/>
            <person name="Yu G."/>
            <person name="Fraser C.M."/>
            <person name="Venter J.C."/>
            <person name="Davis R.W."/>
        </authorList>
    </citation>
    <scope>NUCLEOTIDE SEQUENCE [LARGE SCALE GENOMIC DNA]</scope>
    <source>
        <strain>cv. Columbia</strain>
    </source>
</reference>
<reference key="2">
    <citation type="journal article" date="2017" name="Plant J.">
        <title>Araport11: a complete reannotation of the Arabidopsis thaliana reference genome.</title>
        <authorList>
            <person name="Cheng C.Y."/>
            <person name="Krishnakumar V."/>
            <person name="Chan A.P."/>
            <person name="Thibaud-Nissen F."/>
            <person name="Schobel S."/>
            <person name="Town C.D."/>
        </authorList>
    </citation>
    <scope>GENOME REANNOTATION</scope>
    <source>
        <strain>cv. Columbia</strain>
    </source>
</reference>
<reference key="3">
    <citation type="submission" date="2009-03" db="EMBL/GenBank/DDBJ databases">
        <title>ORF cloning and analysis of Arabidopsis transcription factor genes.</title>
        <authorList>
            <person name="Fujita M."/>
        </authorList>
    </citation>
    <scope>NUCLEOTIDE SEQUENCE [LARGE SCALE MRNA]</scope>
</reference>
<reference key="4">
    <citation type="journal article" date="2006" name="BMC Genomics">
        <title>The maize INDETERMINATE1 flowering time regulator defines a highly conserved zinc finger protein family in higher plants.</title>
        <authorList>
            <person name="Colasanti J."/>
            <person name="Tremblay R."/>
            <person name="Wong A.Y."/>
            <person name="Coneva V."/>
            <person name="Kozaki A."/>
            <person name="Mable B.K."/>
        </authorList>
    </citation>
    <scope>GENE FAMILY</scope>
    <scope>NOMENCLATURE</scope>
</reference>
<reference key="5">
    <citation type="journal article" date="2013" name="PLoS Genet.">
        <title>The arabidopsis IDD14, IDD15, and IDD16 cooperatively regulate lateral organ morphogenesis and gravitropism by promoting auxin biosynthesis and transport.</title>
        <authorList>
            <person name="Cui D."/>
            <person name="Zhao J."/>
            <person name="Jing Y."/>
            <person name="Fan M."/>
            <person name="Liu J."/>
            <person name="Wang Z."/>
            <person name="Xin W."/>
            <person name="Hu Y."/>
        </authorList>
    </citation>
    <scope>FUNCTION</scope>
    <scope>TISSUE SPECIFICITY</scope>
    <scope>INDUCTION BY AUXIN</scope>
</reference>
<dbReference type="EMBL" id="AC079374">
    <property type="protein sequence ID" value="AAG28820.1"/>
    <property type="molecule type" value="Genomic_DNA"/>
</dbReference>
<dbReference type="EMBL" id="CP002684">
    <property type="protein sequence ID" value="AEE30593.1"/>
    <property type="molecule type" value="Genomic_DNA"/>
</dbReference>
<dbReference type="EMBL" id="CP002684">
    <property type="protein sequence ID" value="ANM59434.1"/>
    <property type="molecule type" value="Genomic_DNA"/>
</dbReference>
<dbReference type="EMBL" id="AB493476">
    <property type="protein sequence ID" value="BAH30314.1"/>
    <property type="molecule type" value="mRNA"/>
</dbReference>
<dbReference type="PIR" id="B86382">
    <property type="entry name" value="B86382"/>
</dbReference>
<dbReference type="RefSeq" id="NP_001321791.1">
    <molecule id="Q9FRH4-2"/>
    <property type="nucleotide sequence ID" value="NM_001332672.1"/>
</dbReference>
<dbReference type="RefSeq" id="NP_173896.1">
    <molecule id="Q9FRH4-1"/>
    <property type="nucleotide sequence ID" value="NM_102334.1"/>
</dbReference>
<dbReference type="FunCoup" id="Q9FRH4">
    <property type="interactions" value="1"/>
</dbReference>
<dbReference type="STRING" id="3702.Q9FRH4"/>
<dbReference type="PaxDb" id="3702-AT1G25250.1"/>
<dbReference type="ProteomicsDB" id="228781">
    <molecule id="Q9FRH4-1"/>
</dbReference>
<dbReference type="EnsemblPlants" id="AT1G25250.1">
    <molecule id="Q9FRH4-1"/>
    <property type="protein sequence ID" value="AT1G25250.1"/>
    <property type="gene ID" value="AT1G25250"/>
</dbReference>
<dbReference type="EnsemblPlants" id="AT1G25250.3">
    <molecule id="Q9FRH4-2"/>
    <property type="protein sequence ID" value="AT1G25250.3"/>
    <property type="gene ID" value="AT1G25250"/>
</dbReference>
<dbReference type="GeneID" id="839108"/>
<dbReference type="Gramene" id="AT1G25250.1">
    <molecule id="Q9FRH4-1"/>
    <property type="protein sequence ID" value="AT1G25250.1"/>
    <property type="gene ID" value="AT1G25250"/>
</dbReference>
<dbReference type="Gramene" id="AT1G25250.3">
    <molecule id="Q9FRH4-2"/>
    <property type="protein sequence ID" value="AT1G25250.3"/>
    <property type="gene ID" value="AT1G25250"/>
</dbReference>
<dbReference type="KEGG" id="ath:AT1G25250"/>
<dbReference type="Araport" id="AT1G25250"/>
<dbReference type="TAIR" id="AT1G25250">
    <property type="gene designation" value="IDD16"/>
</dbReference>
<dbReference type="eggNOG" id="KOG1721">
    <property type="taxonomic scope" value="Eukaryota"/>
</dbReference>
<dbReference type="HOGENOM" id="CLU_014578_0_1_1"/>
<dbReference type="InParanoid" id="Q9FRH4"/>
<dbReference type="OMA" id="MIHYEQN"/>
<dbReference type="PhylomeDB" id="Q9FRH4"/>
<dbReference type="PRO" id="PR:Q9FRH4"/>
<dbReference type="Proteomes" id="UP000006548">
    <property type="component" value="Chromosome 1"/>
</dbReference>
<dbReference type="ExpressionAtlas" id="Q9FRH4">
    <property type="expression patterns" value="baseline and differential"/>
</dbReference>
<dbReference type="GO" id="GO:0005634">
    <property type="term" value="C:nucleus"/>
    <property type="evidence" value="ECO:0007669"/>
    <property type="project" value="UniProtKB-SubCell"/>
</dbReference>
<dbReference type="GO" id="GO:0003700">
    <property type="term" value="F:DNA-binding transcription factor activity"/>
    <property type="evidence" value="ECO:0000314"/>
    <property type="project" value="TAIR"/>
</dbReference>
<dbReference type="GO" id="GO:0043565">
    <property type="term" value="F:sequence-specific DNA binding"/>
    <property type="evidence" value="ECO:0000353"/>
    <property type="project" value="TAIR"/>
</dbReference>
<dbReference type="GO" id="GO:0008270">
    <property type="term" value="F:zinc ion binding"/>
    <property type="evidence" value="ECO:0007669"/>
    <property type="project" value="UniProtKB-KW"/>
</dbReference>
<dbReference type="GO" id="GO:0048444">
    <property type="term" value="P:floral organ morphogenesis"/>
    <property type="evidence" value="ECO:0000316"/>
    <property type="project" value="TAIR"/>
</dbReference>
<dbReference type="GO" id="GO:0009630">
    <property type="term" value="P:gravitropism"/>
    <property type="evidence" value="ECO:0000316"/>
    <property type="project" value="TAIR"/>
</dbReference>
<dbReference type="GO" id="GO:0009965">
    <property type="term" value="P:leaf morphogenesis"/>
    <property type="evidence" value="ECO:0000316"/>
    <property type="project" value="TAIR"/>
</dbReference>
<dbReference type="GO" id="GO:2000122">
    <property type="term" value="P:negative regulation of stomatal complex development"/>
    <property type="evidence" value="ECO:0000315"/>
    <property type="project" value="TAIR"/>
</dbReference>
<dbReference type="GO" id="GO:0010601">
    <property type="term" value="P:positive regulation of auxin biosynthetic process"/>
    <property type="evidence" value="ECO:0000316"/>
    <property type="project" value="TAIR"/>
</dbReference>
<dbReference type="GO" id="GO:2000012">
    <property type="term" value="P:regulation of auxin polar transport"/>
    <property type="evidence" value="ECO:0000316"/>
    <property type="project" value="TAIR"/>
</dbReference>
<dbReference type="GO" id="GO:0006355">
    <property type="term" value="P:regulation of DNA-templated transcription"/>
    <property type="evidence" value="ECO:0000304"/>
    <property type="project" value="TAIR"/>
</dbReference>
<dbReference type="FunFam" id="3.30.160.60:FF:000554">
    <property type="entry name" value="protein indeterminate-domain 12-like"/>
    <property type="match status" value="1"/>
</dbReference>
<dbReference type="Gene3D" id="3.30.160.60">
    <property type="entry name" value="Classic Zinc Finger"/>
    <property type="match status" value="1"/>
</dbReference>
<dbReference type="InterPro" id="IPR055187">
    <property type="entry name" value="C2CH-3rd_BIRD-IDD"/>
</dbReference>
<dbReference type="InterPro" id="IPR055186">
    <property type="entry name" value="C2H2-2nd_BIRD-IDD"/>
</dbReference>
<dbReference type="InterPro" id="IPR031140">
    <property type="entry name" value="IDD1-16"/>
</dbReference>
<dbReference type="InterPro" id="IPR036236">
    <property type="entry name" value="Znf_C2H2_sf"/>
</dbReference>
<dbReference type="InterPro" id="IPR013087">
    <property type="entry name" value="Znf_C2H2_type"/>
</dbReference>
<dbReference type="PANTHER" id="PTHR10593:SF244">
    <property type="entry name" value="PROTEIN INDETERMINATE-DOMAIN 16"/>
    <property type="match status" value="1"/>
</dbReference>
<dbReference type="PANTHER" id="PTHR10593">
    <property type="entry name" value="SERINE/THREONINE-PROTEIN KINASE RIO"/>
    <property type="match status" value="1"/>
</dbReference>
<dbReference type="Pfam" id="PF22995">
    <property type="entry name" value="C2CH-3rd_BIRD-IDD"/>
    <property type="match status" value="1"/>
</dbReference>
<dbReference type="Pfam" id="PF22996">
    <property type="entry name" value="C2H2-2nd_BIRD-IDD"/>
    <property type="match status" value="1"/>
</dbReference>
<dbReference type="SMART" id="SM00355">
    <property type="entry name" value="ZnF_C2H2"/>
    <property type="match status" value="3"/>
</dbReference>
<dbReference type="SUPFAM" id="SSF57667">
    <property type="entry name" value="beta-beta-alpha zinc fingers"/>
    <property type="match status" value="1"/>
</dbReference>
<dbReference type="PROSITE" id="PS00028">
    <property type="entry name" value="ZINC_FINGER_C2H2_1"/>
    <property type="match status" value="1"/>
</dbReference>
<dbReference type="PROSITE" id="PS50157">
    <property type="entry name" value="ZINC_FINGER_C2H2_2"/>
    <property type="match status" value="1"/>
</dbReference>
<comment type="function">
    <text evidence="6">Transcription factor regulating lateral organ morphogenesis and gravitropic responses (PubMed:24039602). Has a redundant role with IDD14 in directing leaf and floral organ morphogenesis (PubMed:24039602). Acts cooperatively with IDD15 to control silique and branche orientation (PubMed:24039602). Involved in the establishment of auxin gradients through the regulation of auxin biosynthesis and transport (PubMed:24039602).</text>
</comment>
<comment type="subcellular location">
    <subcellularLocation>
        <location evidence="4">Nucleus</location>
    </subcellularLocation>
</comment>
<comment type="alternative products">
    <event type="alternative splicing"/>
    <isoform>
        <id>Q9FRH4-1</id>
        <name>1</name>
        <sequence type="displayed"/>
    </isoform>
    <isoform>
        <id>Q9FRH4-2</id>
        <name>2</name>
        <sequence type="described" ref="VSP_057333"/>
    </isoform>
</comment>
<comment type="tissue specificity">
    <text evidence="6">Highly expressed in leaves, hypocotyls, roots, vasculature of cotyledons, floral organs and in the endodermis and vasculaturenof inflorescence stems.</text>
</comment>
<comment type="induction">
    <text evidence="6">Not regulated by auxin.</text>
</comment>
<sequence>MELTQPIRENGDPQGHQLTDPDAEVVSLSPRTLLESDRYVCEICNQGFQRDQNLQMHRRRHKVPWKLLKRDKKDEEVRKRVYVCPEPTCLHHDPCHALGDLVGIKKHFRRKHSVHKQWVCERCSKGYAVQSDYKAHLKTCGSRGHSCDCGRVFSRVESFIEHQDTCTIRQPQPTNHRHLQQHTMGLDAPSRTTSTASFGPLLHGLPLLRPPRPSNQHSPAFAYPFNASSAPFESLELQLSIGMARTSAQARHNEKRETSLTKERANEEARKAEETRQEAKRQIEMAEKDFEKAKRIREEAKTELEKAHVVREEAIKRINATMMEITCHSCKQLFQLPVTADESTSSLVMSYVSSATTEGECE</sequence>
<name>IDD16_ARATH</name>
<organism>
    <name type="scientific">Arabidopsis thaliana</name>
    <name type="common">Mouse-ear cress</name>
    <dbReference type="NCBI Taxonomy" id="3702"/>
    <lineage>
        <taxon>Eukaryota</taxon>
        <taxon>Viridiplantae</taxon>
        <taxon>Streptophyta</taxon>
        <taxon>Embryophyta</taxon>
        <taxon>Tracheophyta</taxon>
        <taxon>Spermatophyta</taxon>
        <taxon>Magnoliopsida</taxon>
        <taxon>eudicotyledons</taxon>
        <taxon>Gunneridae</taxon>
        <taxon>Pentapetalae</taxon>
        <taxon>rosids</taxon>
        <taxon>malvids</taxon>
        <taxon>Brassicales</taxon>
        <taxon>Brassicaceae</taxon>
        <taxon>Camelineae</taxon>
        <taxon>Arabidopsis</taxon>
    </lineage>
</organism>
<gene>
    <name evidence="7" type="primary">IDD16</name>
    <name evidence="9" type="ordered locus">At1g25250</name>
    <name evidence="10" type="ORF">F4F7.36</name>
</gene>
<evidence type="ECO:0000250" key="1">
    <source>
        <dbReference type="UniProtKB" id="Q700D2"/>
    </source>
</evidence>
<evidence type="ECO:0000255" key="2"/>
<evidence type="ECO:0000255" key="3">
    <source>
        <dbReference type="PROSITE-ProRule" id="PRU00042"/>
    </source>
</evidence>
<evidence type="ECO:0000255" key="4">
    <source>
        <dbReference type="PROSITE-ProRule" id="PRU00768"/>
    </source>
</evidence>
<evidence type="ECO:0000256" key="5">
    <source>
        <dbReference type="SAM" id="MobiDB-lite"/>
    </source>
</evidence>
<evidence type="ECO:0000269" key="6">
    <source>
    </source>
</evidence>
<evidence type="ECO:0000303" key="7">
    <source>
    </source>
</evidence>
<evidence type="ECO:0000305" key="8"/>
<evidence type="ECO:0000312" key="9">
    <source>
        <dbReference type="Araport" id="AT1G25250"/>
    </source>
</evidence>
<evidence type="ECO:0000312" key="10">
    <source>
        <dbReference type="EMBL" id="AAG28820.1"/>
    </source>
</evidence>
<feature type="chain" id="PRO_0000431549" description="Protein indeterminate-domain 16">
    <location>
        <begin position="1"/>
        <end position="362"/>
    </location>
</feature>
<feature type="zinc finger region" description="C2H2-type 1" evidence="3">
    <location>
        <begin position="39"/>
        <end position="61"/>
    </location>
</feature>
<feature type="zinc finger region" description="C2H2-type 2" evidence="8">
    <location>
        <begin position="82"/>
        <end position="112"/>
    </location>
</feature>
<feature type="zinc finger region" description="CCHC-type 1; atypical" evidence="8">
    <location>
        <begin position="118"/>
        <end position="142"/>
    </location>
</feature>
<feature type="zinc finger region" description="CCHC-type 2; atypical" evidence="8">
    <location>
        <begin position="145"/>
        <end position="168"/>
    </location>
</feature>
<feature type="region of interest" description="Disordered" evidence="5">
    <location>
        <begin position="1"/>
        <end position="22"/>
    </location>
</feature>
<feature type="region of interest" description="SHR-binding" evidence="1">
    <location>
        <begin position="155"/>
        <end position="167"/>
    </location>
</feature>
<feature type="region of interest" description="Disordered" evidence="5">
    <location>
        <begin position="247"/>
        <end position="278"/>
    </location>
</feature>
<feature type="coiled-coil region" evidence="2">
    <location>
        <begin position="252"/>
        <end position="319"/>
    </location>
</feature>
<feature type="compositionally biased region" description="Basic and acidic residues" evidence="5">
    <location>
        <begin position="251"/>
        <end position="278"/>
    </location>
</feature>
<feature type="binding site" evidence="1">
    <location>
        <position position="120"/>
    </location>
    <ligand>
        <name>Zn(2+)</name>
        <dbReference type="ChEBI" id="CHEBI:29105"/>
        <label>1</label>
    </ligand>
</feature>
<feature type="binding site" evidence="1">
    <location>
        <position position="123"/>
    </location>
    <ligand>
        <name>Zn(2+)</name>
        <dbReference type="ChEBI" id="CHEBI:29105"/>
        <label>1</label>
    </ligand>
</feature>
<feature type="binding site" evidence="1">
    <location>
        <position position="136"/>
    </location>
    <ligand>
        <name>Zn(2+)</name>
        <dbReference type="ChEBI" id="CHEBI:29105"/>
        <label>1</label>
    </ligand>
</feature>
<feature type="binding site" evidence="1">
    <location>
        <position position="140"/>
    </location>
    <ligand>
        <name>Zn(2+)</name>
        <dbReference type="ChEBI" id="CHEBI:29105"/>
        <label>1</label>
    </ligand>
</feature>
<feature type="binding site" evidence="1">
    <location>
        <position position="147"/>
    </location>
    <ligand>
        <name>Zn(2+)</name>
        <dbReference type="ChEBI" id="CHEBI:29105"/>
        <label>2</label>
    </ligand>
</feature>
<feature type="binding site" evidence="1">
    <location>
        <position position="149"/>
    </location>
    <ligand>
        <name>Zn(2+)</name>
        <dbReference type="ChEBI" id="CHEBI:29105"/>
        <label>2</label>
    </ligand>
</feature>
<feature type="binding site" evidence="1">
    <location>
        <position position="162"/>
    </location>
    <ligand>
        <name>Zn(2+)</name>
        <dbReference type="ChEBI" id="CHEBI:29105"/>
        <label>2</label>
    </ligand>
</feature>
<feature type="binding site" evidence="1">
    <location>
        <position position="166"/>
    </location>
    <ligand>
        <name>Zn(2+)</name>
        <dbReference type="ChEBI" id="CHEBI:29105"/>
        <label>2</label>
    </ligand>
</feature>
<feature type="splice variant" id="VSP_057333" description="In isoform 2.">
    <original>MELTQPIRENGDPQGHQLT</original>
    <variation>MIHYEQNNNLQNLPSSSSNDLLLGINGADATHKRKRRPAGTP</variation>
    <location>
        <begin position="1"/>
        <end position="19"/>
    </location>
</feature>